<organism>
    <name type="scientific">Burkholderia mallei (strain NCTC 10247)</name>
    <dbReference type="NCBI Taxonomy" id="320389"/>
    <lineage>
        <taxon>Bacteria</taxon>
        <taxon>Pseudomonadati</taxon>
        <taxon>Pseudomonadota</taxon>
        <taxon>Betaproteobacteria</taxon>
        <taxon>Burkholderiales</taxon>
        <taxon>Burkholderiaceae</taxon>
        <taxon>Burkholderia</taxon>
        <taxon>pseudomallei group</taxon>
    </lineage>
</organism>
<name>GCS2_BURM7</name>
<reference key="1">
    <citation type="journal article" date="2010" name="Genome Biol. Evol.">
        <title>Continuing evolution of Burkholderia mallei through genome reduction and large-scale rearrangements.</title>
        <authorList>
            <person name="Losada L."/>
            <person name="Ronning C.M."/>
            <person name="DeShazer D."/>
            <person name="Woods D."/>
            <person name="Fedorova N."/>
            <person name="Kim H.S."/>
            <person name="Shabalina S.A."/>
            <person name="Pearson T.R."/>
            <person name="Brinkac L."/>
            <person name="Tan P."/>
            <person name="Nandi T."/>
            <person name="Crabtree J."/>
            <person name="Badger J."/>
            <person name="Beckstrom-Sternberg S."/>
            <person name="Saqib M."/>
            <person name="Schutzer S.E."/>
            <person name="Keim P."/>
            <person name="Nierman W.C."/>
        </authorList>
    </citation>
    <scope>NUCLEOTIDE SEQUENCE [LARGE SCALE GENOMIC DNA]</scope>
    <source>
        <strain>NCTC 10247</strain>
    </source>
</reference>
<sequence length="371" mass="41779">MALETFVNSEPFTFGVELEIQIVNTHNYDLTKAASDLMRLIKDAKFPGNITPEITESMIELSTGICRTHDQALGELHAIRDTLVSAADQLNVGLCGGGTHAFQQWSERQIFDAPRFQYISELYGYLAKQFTVFGQHVHIGCPDADSALFLLHSMSRFIPHFIALSASSPYVQNVDTGFHSARLNSVFAFPLSGRAPFVLTWHGFEEYFTKMVNTGVVNSMKDFYWDIRPKPGYGTIEVRVMDTPLSVDRAAAIACYIQTLARYLLIDRPLKLSEDDYLVYTFNRFEACRFGLEGTCVNPQTGERRTIAEDILDTLDRIAPHAAALGSRAALDEIGALAKARVNDASWLRTIFKQEKSLNETVRQQCLRWRE</sequence>
<feature type="chain" id="PRO_1000069426" description="Putative glutamate--cysteine ligase 2">
    <location>
        <begin position="1"/>
        <end position="371"/>
    </location>
</feature>
<protein>
    <recommendedName>
        <fullName evidence="1">Putative glutamate--cysteine ligase 2</fullName>
        <ecNumber evidence="1">6.3.2.2</ecNumber>
    </recommendedName>
    <alternativeName>
        <fullName evidence="1">Gamma-glutamylcysteine synthetase 2</fullName>
        <shortName evidence="1">GCS 2</shortName>
        <shortName evidence="1">Gamma-GCS 2</shortName>
    </alternativeName>
</protein>
<keyword id="KW-0067">ATP-binding</keyword>
<keyword id="KW-0436">Ligase</keyword>
<keyword id="KW-0547">Nucleotide-binding</keyword>
<evidence type="ECO:0000255" key="1">
    <source>
        <dbReference type="HAMAP-Rule" id="MF_01609"/>
    </source>
</evidence>
<accession>A3MQF9</accession>
<comment type="function">
    <text evidence="1">ATP-dependent carboxylate-amine ligase which exhibits weak glutamate--cysteine ligase activity.</text>
</comment>
<comment type="catalytic activity">
    <reaction evidence="1">
        <text>L-cysteine + L-glutamate + ATP = gamma-L-glutamyl-L-cysteine + ADP + phosphate + H(+)</text>
        <dbReference type="Rhea" id="RHEA:13285"/>
        <dbReference type="ChEBI" id="CHEBI:15378"/>
        <dbReference type="ChEBI" id="CHEBI:29985"/>
        <dbReference type="ChEBI" id="CHEBI:30616"/>
        <dbReference type="ChEBI" id="CHEBI:35235"/>
        <dbReference type="ChEBI" id="CHEBI:43474"/>
        <dbReference type="ChEBI" id="CHEBI:58173"/>
        <dbReference type="ChEBI" id="CHEBI:456216"/>
        <dbReference type="EC" id="6.3.2.2"/>
    </reaction>
</comment>
<comment type="similarity">
    <text evidence="1">Belongs to the glutamate--cysteine ligase type 2 family. YbdK subfamily.</text>
</comment>
<gene>
    <name type="ordered locus">BMA10247_2975</name>
</gene>
<dbReference type="EC" id="6.3.2.2" evidence="1"/>
<dbReference type="EMBL" id="CP000548">
    <property type="protein sequence ID" value="ABO04205.1"/>
    <property type="molecule type" value="Genomic_DNA"/>
</dbReference>
<dbReference type="RefSeq" id="WP_004195787.1">
    <property type="nucleotide sequence ID" value="NZ_CP007802.1"/>
</dbReference>
<dbReference type="SMR" id="A3MQF9"/>
<dbReference type="KEGG" id="bmaz:BM44_372"/>
<dbReference type="KEGG" id="bmn:BMA10247_2975"/>
<dbReference type="PATRIC" id="fig|320389.8.peg.411"/>
<dbReference type="GO" id="GO:0005524">
    <property type="term" value="F:ATP binding"/>
    <property type="evidence" value="ECO:0007669"/>
    <property type="project" value="UniProtKB-KW"/>
</dbReference>
<dbReference type="GO" id="GO:0004357">
    <property type="term" value="F:glutamate-cysteine ligase activity"/>
    <property type="evidence" value="ECO:0007669"/>
    <property type="project" value="UniProtKB-EC"/>
</dbReference>
<dbReference type="GO" id="GO:0042398">
    <property type="term" value="P:modified amino acid biosynthetic process"/>
    <property type="evidence" value="ECO:0007669"/>
    <property type="project" value="InterPro"/>
</dbReference>
<dbReference type="Gene3D" id="3.30.590.20">
    <property type="match status" value="1"/>
</dbReference>
<dbReference type="HAMAP" id="MF_01609">
    <property type="entry name" value="Glu_cys_ligase_2"/>
    <property type="match status" value="1"/>
</dbReference>
<dbReference type="InterPro" id="IPR050141">
    <property type="entry name" value="GCL_type2/YbdK_subfam"/>
</dbReference>
<dbReference type="InterPro" id="IPR006336">
    <property type="entry name" value="GCS2"/>
</dbReference>
<dbReference type="InterPro" id="IPR014746">
    <property type="entry name" value="Gln_synth/guanido_kin_cat_dom"/>
</dbReference>
<dbReference type="InterPro" id="IPR011793">
    <property type="entry name" value="YbdK"/>
</dbReference>
<dbReference type="NCBIfam" id="TIGR02050">
    <property type="entry name" value="gshA_cyan_rel"/>
    <property type="match status" value="1"/>
</dbReference>
<dbReference type="NCBIfam" id="NF010040">
    <property type="entry name" value="PRK13516.1"/>
    <property type="match status" value="1"/>
</dbReference>
<dbReference type="PANTHER" id="PTHR36510">
    <property type="entry name" value="GLUTAMATE--CYSTEINE LIGASE 2-RELATED"/>
    <property type="match status" value="1"/>
</dbReference>
<dbReference type="PANTHER" id="PTHR36510:SF1">
    <property type="entry name" value="GLUTAMATE--CYSTEINE LIGASE 2-RELATED"/>
    <property type="match status" value="1"/>
</dbReference>
<dbReference type="Pfam" id="PF04107">
    <property type="entry name" value="GCS2"/>
    <property type="match status" value="1"/>
</dbReference>
<dbReference type="SUPFAM" id="SSF55931">
    <property type="entry name" value="Glutamine synthetase/guanido kinase"/>
    <property type="match status" value="1"/>
</dbReference>
<proteinExistence type="inferred from homology"/>